<name>PYRH_SHIF8</name>
<sequence length="241" mass="25970">MATNAKPVYKRILLKLSGEALQGTEGFGIDASILDRMAQEIKELVELGIQVGVVIGGGNLFRGAGLAKAGMNRVVGDHMGMLATVMNGLAMRDALHRAYVNARLMSAIPLNGVCDSYSWAEAISLLRNNRVVILSAGTGNPFFTTDSAACLRGIEIEADVVLKATKVDGVFTADPAKDPTATMYEQLTYSEVLEKELKVMDLAAFTLARDHKLPIRVFNMNKPGALRRVVMGEKEGTLITE</sequence>
<reference key="1">
    <citation type="journal article" date="2006" name="BMC Genomics">
        <title>Complete genome sequence of Shigella flexneri 5b and comparison with Shigella flexneri 2a.</title>
        <authorList>
            <person name="Nie H."/>
            <person name="Yang F."/>
            <person name="Zhang X."/>
            <person name="Yang J."/>
            <person name="Chen L."/>
            <person name="Wang J."/>
            <person name="Xiong Z."/>
            <person name="Peng J."/>
            <person name="Sun L."/>
            <person name="Dong J."/>
            <person name="Xue Y."/>
            <person name="Xu X."/>
            <person name="Chen S."/>
            <person name="Yao Z."/>
            <person name="Shen Y."/>
            <person name="Jin Q."/>
        </authorList>
    </citation>
    <scope>NUCLEOTIDE SEQUENCE [LARGE SCALE GENOMIC DNA]</scope>
    <source>
        <strain>8401</strain>
    </source>
</reference>
<accession>Q0T838</accession>
<organism>
    <name type="scientific">Shigella flexneri serotype 5b (strain 8401)</name>
    <dbReference type="NCBI Taxonomy" id="373384"/>
    <lineage>
        <taxon>Bacteria</taxon>
        <taxon>Pseudomonadati</taxon>
        <taxon>Pseudomonadota</taxon>
        <taxon>Gammaproteobacteria</taxon>
        <taxon>Enterobacterales</taxon>
        <taxon>Enterobacteriaceae</taxon>
        <taxon>Shigella</taxon>
    </lineage>
</organism>
<keyword id="KW-0021">Allosteric enzyme</keyword>
<keyword id="KW-0067">ATP-binding</keyword>
<keyword id="KW-0963">Cytoplasm</keyword>
<keyword id="KW-0418">Kinase</keyword>
<keyword id="KW-0547">Nucleotide-binding</keyword>
<keyword id="KW-0665">Pyrimidine biosynthesis</keyword>
<keyword id="KW-0808">Transferase</keyword>
<comment type="function">
    <text evidence="1">Catalyzes the reversible phosphorylation of UMP to UDP.</text>
</comment>
<comment type="catalytic activity">
    <reaction evidence="1">
        <text>UMP + ATP = UDP + ADP</text>
        <dbReference type="Rhea" id="RHEA:24400"/>
        <dbReference type="ChEBI" id="CHEBI:30616"/>
        <dbReference type="ChEBI" id="CHEBI:57865"/>
        <dbReference type="ChEBI" id="CHEBI:58223"/>
        <dbReference type="ChEBI" id="CHEBI:456216"/>
        <dbReference type="EC" id="2.7.4.22"/>
    </reaction>
</comment>
<comment type="activity regulation">
    <text evidence="1">Allosterically activated by GTP. Inhibited by UTP.</text>
</comment>
<comment type="pathway">
    <text evidence="1">Pyrimidine metabolism; CTP biosynthesis via de novo pathway; UDP from UMP (UMPK route): step 1/1.</text>
</comment>
<comment type="subunit">
    <text evidence="1">Homohexamer.</text>
</comment>
<comment type="subcellular location">
    <subcellularLocation>
        <location evidence="1">Cytoplasm</location>
    </subcellularLocation>
</comment>
<comment type="similarity">
    <text evidence="1">Belongs to the UMP kinase family.</text>
</comment>
<evidence type="ECO:0000255" key="1">
    <source>
        <dbReference type="HAMAP-Rule" id="MF_01220"/>
    </source>
</evidence>
<proteinExistence type="inferred from homology"/>
<gene>
    <name evidence="1" type="primary">pyrH</name>
    <name type="ordered locus">SFV_0154</name>
</gene>
<dbReference type="EC" id="2.7.4.22" evidence="1"/>
<dbReference type="EMBL" id="CP000266">
    <property type="protein sequence ID" value="ABF02438.1"/>
    <property type="molecule type" value="Genomic_DNA"/>
</dbReference>
<dbReference type="RefSeq" id="WP_000224573.1">
    <property type="nucleotide sequence ID" value="NC_008258.1"/>
</dbReference>
<dbReference type="SMR" id="Q0T838"/>
<dbReference type="GeneID" id="93777254"/>
<dbReference type="KEGG" id="sfv:SFV_0154"/>
<dbReference type="HOGENOM" id="CLU_033861_0_0_6"/>
<dbReference type="UniPathway" id="UPA00159">
    <property type="reaction ID" value="UER00275"/>
</dbReference>
<dbReference type="Proteomes" id="UP000000659">
    <property type="component" value="Chromosome"/>
</dbReference>
<dbReference type="GO" id="GO:0005829">
    <property type="term" value="C:cytosol"/>
    <property type="evidence" value="ECO:0007669"/>
    <property type="project" value="TreeGrafter"/>
</dbReference>
<dbReference type="GO" id="GO:0005524">
    <property type="term" value="F:ATP binding"/>
    <property type="evidence" value="ECO:0007669"/>
    <property type="project" value="UniProtKB-KW"/>
</dbReference>
<dbReference type="GO" id="GO:0033862">
    <property type="term" value="F:UMP kinase activity"/>
    <property type="evidence" value="ECO:0007669"/>
    <property type="project" value="UniProtKB-EC"/>
</dbReference>
<dbReference type="GO" id="GO:0044210">
    <property type="term" value="P:'de novo' CTP biosynthetic process"/>
    <property type="evidence" value="ECO:0007669"/>
    <property type="project" value="UniProtKB-UniRule"/>
</dbReference>
<dbReference type="GO" id="GO:0006225">
    <property type="term" value="P:UDP biosynthetic process"/>
    <property type="evidence" value="ECO:0007669"/>
    <property type="project" value="TreeGrafter"/>
</dbReference>
<dbReference type="CDD" id="cd04254">
    <property type="entry name" value="AAK_UMPK-PyrH-Ec"/>
    <property type="match status" value="1"/>
</dbReference>
<dbReference type="FunFam" id="3.40.1160.10:FF:000001">
    <property type="entry name" value="Uridylate kinase"/>
    <property type="match status" value="1"/>
</dbReference>
<dbReference type="Gene3D" id="3.40.1160.10">
    <property type="entry name" value="Acetylglutamate kinase-like"/>
    <property type="match status" value="1"/>
</dbReference>
<dbReference type="HAMAP" id="MF_01220_B">
    <property type="entry name" value="PyrH_B"/>
    <property type="match status" value="1"/>
</dbReference>
<dbReference type="InterPro" id="IPR036393">
    <property type="entry name" value="AceGlu_kinase-like_sf"/>
</dbReference>
<dbReference type="InterPro" id="IPR001048">
    <property type="entry name" value="Asp/Glu/Uridylate_kinase"/>
</dbReference>
<dbReference type="InterPro" id="IPR011817">
    <property type="entry name" value="Uridylate_kinase"/>
</dbReference>
<dbReference type="InterPro" id="IPR015963">
    <property type="entry name" value="Uridylate_kinase_bac"/>
</dbReference>
<dbReference type="NCBIfam" id="TIGR02075">
    <property type="entry name" value="pyrH_bact"/>
    <property type="match status" value="1"/>
</dbReference>
<dbReference type="PANTHER" id="PTHR42833">
    <property type="entry name" value="URIDYLATE KINASE"/>
    <property type="match status" value="1"/>
</dbReference>
<dbReference type="PANTHER" id="PTHR42833:SF4">
    <property type="entry name" value="URIDYLATE KINASE PUMPKIN, CHLOROPLASTIC"/>
    <property type="match status" value="1"/>
</dbReference>
<dbReference type="Pfam" id="PF00696">
    <property type="entry name" value="AA_kinase"/>
    <property type="match status" value="1"/>
</dbReference>
<dbReference type="PIRSF" id="PIRSF005650">
    <property type="entry name" value="Uridylate_kin"/>
    <property type="match status" value="1"/>
</dbReference>
<dbReference type="SUPFAM" id="SSF53633">
    <property type="entry name" value="Carbamate kinase-like"/>
    <property type="match status" value="1"/>
</dbReference>
<feature type="chain" id="PRO_1000054018" description="Uridylate kinase">
    <location>
        <begin position="1"/>
        <end position="241"/>
    </location>
</feature>
<feature type="region of interest" description="Involved in allosteric activation by GTP" evidence="1">
    <location>
        <begin position="23"/>
        <end position="28"/>
    </location>
</feature>
<feature type="binding site" evidence="1">
    <location>
        <begin position="15"/>
        <end position="18"/>
    </location>
    <ligand>
        <name>ATP</name>
        <dbReference type="ChEBI" id="CHEBI:30616"/>
    </ligand>
</feature>
<feature type="binding site" evidence="1">
    <location>
        <position position="57"/>
    </location>
    <ligand>
        <name>UMP</name>
        <dbReference type="ChEBI" id="CHEBI:57865"/>
    </ligand>
</feature>
<feature type="binding site" evidence="1">
    <location>
        <position position="58"/>
    </location>
    <ligand>
        <name>ATP</name>
        <dbReference type="ChEBI" id="CHEBI:30616"/>
    </ligand>
</feature>
<feature type="binding site" evidence="1">
    <location>
        <position position="62"/>
    </location>
    <ligand>
        <name>ATP</name>
        <dbReference type="ChEBI" id="CHEBI:30616"/>
    </ligand>
</feature>
<feature type="binding site" evidence="1">
    <location>
        <position position="77"/>
    </location>
    <ligand>
        <name>UMP</name>
        <dbReference type="ChEBI" id="CHEBI:57865"/>
    </ligand>
</feature>
<feature type="binding site" evidence="1">
    <location>
        <begin position="138"/>
        <end position="145"/>
    </location>
    <ligand>
        <name>UMP</name>
        <dbReference type="ChEBI" id="CHEBI:57865"/>
    </ligand>
</feature>
<feature type="binding site" evidence="1">
    <location>
        <position position="165"/>
    </location>
    <ligand>
        <name>ATP</name>
        <dbReference type="ChEBI" id="CHEBI:30616"/>
    </ligand>
</feature>
<feature type="binding site" evidence="1">
    <location>
        <position position="171"/>
    </location>
    <ligand>
        <name>ATP</name>
        <dbReference type="ChEBI" id="CHEBI:30616"/>
    </ligand>
</feature>
<feature type="binding site" evidence="1">
    <location>
        <position position="174"/>
    </location>
    <ligand>
        <name>ATP</name>
        <dbReference type="ChEBI" id="CHEBI:30616"/>
    </ligand>
</feature>
<protein>
    <recommendedName>
        <fullName evidence="1">Uridylate kinase</fullName>
        <shortName evidence="1">UK</shortName>
        <ecNumber evidence="1">2.7.4.22</ecNumber>
    </recommendedName>
    <alternativeName>
        <fullName evidence="1">Uridine monophosphate kinase</fullName>
        <shortName evidence="1">UMP kinase</shortName>
        <shortName evidence="1">UMPK</shortName>
    </alternativeName>
</protein>